<evidence type="ECO:0000250" key="1"/>
<evidence type="ECO:0000256" key="2">
    <source>
        <dbReference type="SAM" id="MobiDB-lite"/>
    </source>
</evidence>
<evidence type="ECO:0000269" key="3">
    <source>
    </source>
</evidence>
<evidence type="ECO:0000305" key="4"/>
<comment type="function">
    <text evidence="3">May be involved in abscisic acid signaling by acting as a kinase regulator.</text>
</comment>
<comment type="subcellular location">
    <subcellularLocation>
        <location evidence="1">Cell membrane</location>
    </subcellularLocation>
</comment>
<comment type="sequence caution" evidence="4">
    <conflict type="erroneous gene model prediction">
        <sequence resource="EMBL-CDS" id="BAB10438"/>
    </conflict>
</comment>
<reference key="1">
    <citation type="journal article" date="1998" name="DNA Res.">
        <title>Structural analysis of Arabidopsis thaliana chromosome 5. IV. Sequence features of the regions of 1,456,315 bp covered by nineteen physically assigned P1 and TAC clones.</title>
        <authorList>
            <person name="Sato S."/>
            <person name="Kaneko T."/>
            <person name="Kotani H."/>
            <person name="Nakamura Y."/>
            <person name="Asamizu E."/>
            <person name="Miyajima N."/>
            <person name="Tabata S."/>
        </authorList>
    </citation>
    <scope>NUCLEOTIDE SEQUENCE [LARGE SCALE GENOMIC DNA]</scope>
    <source>
        <strain>cv. Columbia</strain>
    </source>
</reference>
<reference key="2">
    <citation type="journal article" date="2017" name="Plant J.">
        <title>Araport11: a complete reannotation of the Arabidopsis thaliana reference genome.</title>
        <authorList>
            <person name="Cheng C.Y."/>
            <person name="Krishnakumar V."/>
            <person name="Chan A.P."/>
            <person name="Thibaud-Nissen F."/>
            <person name="Schobel S."/>
            <person name="Town C.D."/>
        </authorList>
    </citation>
    <scope>GENOME REANNOTATION</scope>
    <source>
        <strain>cv. Columbia</strain>
    </source>
</reference>
<reference key="3">
    <citation type="journal article" date="2003" name="Science">
        <title>Empirical analysis of transcriptional activity in the Arabidopsis genome.</title>
        <authorList>
            <person name="Yamada K."/>
            <person name="Lim J."/>
            <person name="Dale J.M."/>
            <person name="Chen H."/>
            <person name="Shinn P."/>
            <person name="Palm C.J."/>
            <person name="Southwick A.M."/>
            <person name="Wu H.C."/>
            <person name="Kim C.J."/>
            <person name="Nguyen M."/>
            <person name="Pham P.K."/>
            <person name="Cheuk R.F."/>
            <person name="Karlin-Newmann G."/>
            <person name="Liu S.X."/>
            <person name="Lam B."/>
            <person name="Sakano H."/>
            <person name="Wu T."/>
            <person name="Yu G."/>
            <person name="Miranda M."/>
            <person name="Quach H.L."/>
            <person name="Tripp M."/>
            <person name="Chang C.H."/>
            <person name="Lee J.M."/>
            <person name="Toriumi M.J."/>
            <person name="Chan M.M."/>
            <person name="Tang C.C."/>
            <person name="Onodera C.S."/>
            <person name="Deng J.M."/>
            <person name="Akiyama K."/>
            <person name="Ansari Y."/>
            <person name="Arakawa T."/>
            <person name="Banh J."/>
            <person name="Banno F."/>
            <person name="Bowser L."/>
            <person name="Brooks S.Y."/>
            <person name="Carninci P."/>
            <person name="Chao Q."/>
            <person name="Choy N."/>
            <person name="Enju A."/>
            <person name="Goldsmith A.D."/>
            <person name="Gurjal M."/>
            <person name="Hansen N.F."/>
            <person name="Hayashizaki Y."/>
            <person name="Johnson-Hopson C."/>
            <person name="Hsuan V.W."/>
            <person name="Iida K."/>
            <person name="Karnes M."/>
            <person name="Khan S."/>
            <person name="Koesema E."/>
            <person name="Ishida J."/>
            <person name="Jiang P.X."/>
            <person name="Jones T."/>
            <person name="Kawai J."/>
            <person name="Kamiya A."/>
            <person name="Meyers C."/>
            <person name="Nakajima M."/>
            <person name="Narusaka M."/>
            <person name="Seki M."/>
            <person name="Sakurai T."/>
            <person name="Satou M."/>
            <person name="Tamse R."/>
            <person name="Vaysberg M."/>
            <person name="Wallender E.K."/>
            <person name="Wong C."/>
            <person name="Yamamura Y."/>
            <person name="Yuan S."/>
            <person name="Shinozaki K."/>
            <person name="Davis R.W."/>
            <person name="Theologis A."/>
            <person name="Ecker J.R."/>
        </authorList>
    </citation>
    <scope>NUCLEOTIDE SEQUENCE [LARGE SCALE MRNA]</scope>
    <source>
        <strain>cv. Columbia</strain>
    </source>
</reference>
<reference key="4">
    <citation type="submission" date="2002-03" db="EMBL/GenBank/DDBJ databases">
        <title>Full-length cDNA from Arabidopsis thaliana.</title>
        <authorList>
            <person name="Brover V.V."/>
            <person name="Troukhan M.E."/>
            <person name="Alexandrov N.A."/>
            <person name="Lu Y.-P."/>
            <person name="Flavell R.B."/>
            <person name="Feldmann K.A."/>
        </authorList>
    </citation>
    <scope>NUCLEOTIDE SEQUENCE [LARGE SCALE MRNA]</scope>
</reference>
<reference key="5">
    <citation type="submission" date="2006-07" db="EMBL/GenBank/DDBJ databases">
        <title>Large-scale analysis of RIKEN Arabidopsis full-length (RAFL) cDNAs.</title>
        <authorList>
            <person name="Totoki Y."/>
            <person name="Seki M."/>
            <person name="Ishida J."/>
            <person name="Nakajima M."/>
            <person name="Enju A."/>
            <person name="Kamiya A."/>
            <person name="Narusaka M."/>
            <person name="Shin-i T."/>
            <person name="Nakagawa M."/>
            <person name="Sakamoto N."/>
            <person name="Oishi K."/>
            <person name="Kohara Y."/>
            <person name="Kobayashi M."/>
            <person name="Toyoda A."/>
            <person name="Sakaki Y."/>
            <person name="Sakurai T."/>
            <person name="Iida K."/>
            <person name="Akiyama K."/>
            <person name="Satou M."/>
            <person name="Toyoda T."/>
            <person name="Konagaya A."/>
            <person name="Carninci P."/>
            <person name="Kawai J."/>
            <person name="Hayashizaki Y."/>
            <person name="Shinozaki K."/>
        </authorList>
    </citation>
    <scope>NUCLEOTIDE SEQUENCE [LARGE SCALE MRNA]</scope>
    <source>
        <strain>cv. Columbia</strain>
    </source>
</reference>
<reference key="6">
    <citation type="journal article" date="2005" name="Plant Cell">
        <title>Leucine-rich repeat receptor-like kinase1 is a key membrane-bound regulator of abscisic acid early signaling in Arabidopsis.</title>
        <authorList>
            <person name="Osakabe Y."/>
            <person name="Maruyama K."/>
            <person name="Seki M."/>
            <person name="Satou M."/>
            <person name="Shinozaki K."/>
            <person name="Yamaguchi-Shinozaki K."/>
        </authorList>
    </citation>
    <scope>FUNCTION</scope>
</reference>
<reference key="7">
    <citation type="journal article" date="2011" name="Genes Dev.">
        <title>Tyrosine phosphorylation controls brassinosteroid receptor activation by triggering membrane release of its kinase inhibitor.</title>
        <authorList>
            <person name="Jaillais Y."/>
            <person name="Hothorn M."/>
            <person name="Belkhadir Y."/>
            <person name="Dabi T."/>
            <person name="Nimchuk Z.L."/>
            <person name="Meyerowitz E.M."/>
            <person name="Chory J."/>
        </authorList>
    </citation>
    <scope>GENE FAMILY</scope>
    <scope>NOMENCLATURE</scope>
</reference>
<name>MAKR6_ARATH</name>
<accession>Q84JK8</accession>
<accession>Q8LEK7</accession>
<accession>Q9FLX1</accession>
<protein>
    <recommendedName>
        <fullName>Probable membrane-associated kinase regulator 6</fullName>
    </recommendedName>
</protein>
<sequence>MEEGKQEASMPLVPIDSFSYSWLVNFPSLEATIDDHHQTYEDSSSSSSFIEMDPRLPPSRRFFIKTSHESSFKFDNFVSFSDEDHSLVHADELFRDGYVMPYRLKPTSAATEEESEPLDTTTSEKIDTRGLNSKPSPTSSRKLRRVSKWVLLKYLDFLTPLCKRLRRCRSAVTTGSIGMDSRIRVTTSCRSRVYSDEMTSSPRISVADDYYWRRSCDSESSIYEAVLHCKKSFEK</sequence>
<feature type="chain" id="PRO_0000410481" description="Probable membrane-associated kinase regulator 6">
    <location>
        <begin position="1"/>
        <end position="235"/>
    </location>
</feature>
<feature type="region of interest" description="Disordered" evidence="2">
    <location>
        <begin position="108"/>
        <end position="140"/>
    </location>
</feature>
<feature type="compositionally biased region" description="Polar residues" evidence="2">
    <location>
        <begin position="130"/>
        <end position="140"/>
    </location>
</feature>
<feature type="sequence conflict" description="In Ref. 4; AAM62601." evidence="4" ref="4">
    <original>G</original>
    <variation>D</variation>
    <location>
        <position position="4"/>
    </location>
</feature>
<feature type="sequence conflict" description="In Ref. 4; AAM62601." evidence="4" ref="4">
    <original>Y</original>
    <variation>F</variation>
    <location>
        <position position="40"/>
    </location>
</feature>
<gene>
    <name type="primary">MAKR6</name>
    <name type="ordered locus">At5g52900</name>
    <name type="ORF">MXC20.13</name>
</gene>
<organism>
    <name type="scientific">Arabidopsis thaliana</name>
    <name type="common">Mouse-ear cress</name>
    <dbReference type="NCBI Taxonomy" id="3702"/>
    <lineage>
        <taxon>Eukaryota</taxon>
        <taxon>Viridiplantae</taxon>
        <taxon>Streptophyta</taxon>
        <taxon>Embryophyta</taxon>
        <taxon>Tracheophyta</taxon>
        <taxon>Spermatophyta</taxon>
        <taxon>Magnoliopsida</taxon>
        <taxon>eudicotyledons</taxon>
        <taxon>Gunneridae</taxon>
        <taxon>Pentapetalae</taxon>
        <taxon>rosids</taxon>
        <taxon>malvids</taxon>
        <taxon>Brassicales</taxon>
        <taxon>Brassicaceae</taxon>
        <taxon>Camelineae</taxon>
        <taxon>Arabidopsis</taxon>
    </lineage>
</organism>
<keyword id="KW-0938">Abscisic acid signaling pathway</keyword>
<keyword id="KW-1003">Cell membrane</keyword>
<keyword id="KW-0472">Membrane</keyword>
<keyword id="KW-1185">Reference proteome</keyword>
<proteinExistence type="evidence at transcript level"/>
<dbReference type="EMBL" id="AB009055">
    <property type="protein sequence ID" value="BAB10438.1"/>
    <property type="status" value="ALT_SEQ"/>
    <property type="molecule type" value="Genomic_DNA"/>
</dbReference>
<dbReference type="EMBL" id="CP002688">
    <property type="protein sequence ID" value="AED96275.1"/>
    <property type="molecule type" value="Genomic_DNA"/>
</dbReference>
<dbReference type="EMBL" id="BT005766">
    <property type="protein sequence ID" value="AAO64170.1"/>
    <property type="molecule type" value="mRNA"/>
</dbReference>
<dbReference type="EMBL" id="BT006089">
    <property type="protein sequence ID" value="AAP04074.1"/>
    <property type="molecule type" value="mRNA"/>
</dbReference>
<dbReference type="EMBL" id="AY085371">
    <property type="protein sequence ID" value="AAM62601.1"/>
    <property type="molecule type" value="mRNA"/>
</dbReference>
<dbReference type="EMBL" id="AK228555">
    <property type="protein sequence ID" value="BAF00476.1"/>
    <property type="molecule type" value="mRNA"/>
</dbReference>
<dbReference type="RefSeq" id="NP_568780.1">
    <property type="nucleotide sequence ID" value="NM_124668.3"/>
</dbReference>
<dbReference type="FunCoup" id="Q84JK8">
    <property type="interactions" value="137"/>
</dbReference>
<dbReference type="STRING" id="3702.Q84JK8"/>
<dbReference type="GlyGen" id="Q84JK8">
    <property type="glycosylation" value="1 site"/>
</dbReference>
<dbReference type="iPTMnet" id="Q84JK8"/>
<dbReference type="PaxDb" id="3702-AT5G52900.1"/>
<dbReference type="ProteomicsDB" id="238762"/>
<dbReference type="EnsemblPlants" id="AT5G52900.1">
    <property type="protein sequence ID" value="AT5G52900.1"/>
    <property type="gene ID" value="AT5G52900"/>
</dbReference>
<dbReference type="GeneID" id="835367"/>
<dbReference type="Gramene" id="AT5G52900.1">
    <property type="protein sequence ID" value="AT5G52900.1"/>
    <property type="gene ID" value="AT5G52900"/>
</dbReference>
<dbReference type="KEGG" id="ath:AT5G52900"/>
<dbReference type="Araport" id="AT5G52900"/>
<dbReference type="TAIR" id="AT5G52900">
    <property type="gene designation" value="MAKR6"/>
</dbReference>
<dbReference type="eggNOG" id="ENOG502QPRB">
    <property type="taxonomic scope" value="Eukaryota"/>
</dbReference>
<dbReference type="HOGENOM" id="CLU_082878_0_0_1"/>
<dbReference type="InParanoid" id="Q84JK8"/>
<dbReference type="OMA" id="DEYRKSC"/>
<dbReference type="PhylomeDB" id="Q84JK8"/>
<dbReference type="PRO" id="PR:Q84JK8"/>
<dbReference type="Proteomes" id="UP000006548">
    <property type="component" value="Chromosome 5"/>
</dbReference>
<dbReference type="ExpressionAtlas" id="Q84JK8">
    <property type="expression patterns" value="baseline and differential"/>
</dbReference>
<dbReference type="GO" id="GO:0005886">
    <property type="term" value="C:plasma membrane"/>
    <property type="evidence" value="ECO:0007669"/>
    <property type="project" value="UniProtKB-SubCell"/>
</dbReference>
<dbReference type="GO" id="GO:0009738">
    <property type="term" value="P:abscisic acid-activated signaling pathway"/>
    <property type="evidence" value="ECO:0007669"/>
    <property type="project" value="UniProtKB-KW"/>
</dbReference>
<dbReference type="InterPro" id="IPR044699">
    <property type="entry name" value="MAKR6"/>
</dbReference>
<dbReference type="PANTHER" id="PTHR34576">
    <property type="entry name" value="MEMBRANE-ASSOCIATED KINASE REGULATOR 6-RELATED"/>
    <property type="match status" value="1"/>
</dbReference>
<dbReference type="PANTHER" id="PTHR34576:SF2">
    <property type="entry name" value="MEMBRANE-ASSOCIATED KINASE REGULATOR 6-RELATED"/>
    <property type="match status" value="1"/>
</dbReference>